<accession>Q67T82</accession>
<protein>
    <recommendedName>
        <fullName evidence="1">ATP-dependent zinc metalloprotease FtsH 2</fullName>
        <ecNumber evidence="1">3.4.24.-</ecNumber>
    </recommendedName>
</protein>
<feature type="chain" id="PRO_0000400403" description="ATP-dependent zinc metalloprotease FtsH 2">
    <location>
        <begin position="1"/>
        <end position="587"/>
    </location>
</feature>
<feature type="topological domain" description="Cytoplasmic" evidence="1">
    <location>
        <begin position="1"/>
        <end position="12"/>
    </location>
</feature>
<feature type="transmembrane region" description="Helical" evidence="1">
    <location>
        <begin position="13"/>
        <end position="33"/>
    </location>
</feature>
<feature type="topological domain" description="Extracellular" evidence="1">
    <location>
        <begin position="34"/>
        <end position="102"/>
    </location>
</feature>
<feature type="transmembrane region" description="Helical" evidence="1">
    <location>
        <begin position="103"/>
        <end position="123"/>
    </location>
</feature>
<feature type="topological domain" description="Cytoplasmic" evidence="1">
    <location>
        <begin position="124"/>
        <end position="587"/>
    </location>
</feature>
<feature type="active site" evidence="1">
    <location>
        <position position="417"/>
    </location>
</feature>
<feature type="binding site" evidence="1">
    <location>
        <begin position="192"/>
        <end position="199"/>
    </location>
    <ligand>
        <name>ATP</name>
        <dbReference type="ChEBI" id="CHEBI:30616"/>
    </ligand>
</feature>
<feature type="binding site" evidence="1">
    <location>
        <position position="416"/>
    </location>
    <ligand>
        <name>Zn(2+)</name>
        <dbReference type="ChEBI" id="CHEBI:29105"/>
        <note>catalytic</note>
    </ligand>
</feature>
<feature type="binding site" evidence="1">
    <location>
        <position position="420"/>
    </location>
    <ligand>
        <name>Zn(2+)</name>
        <dbReference type="ChEBI" id="CHEBI:29105"/>
        <note>catalytic</note>
    </ligand>
</feature>
<feature type="binding site" evidence="1">
    <location>
        <position position="492"/>
    </location>
    <ligand>
        <name>Zn(2+)</name>
        <dbReference type="ChEBI" id="CHEBI:29105"/>
        <note>catalytic</note>
    </ligand>
</feature>
<proteinExistence type="inferred from homology"/>
<name>FTSH2_SYMTH</name>
<evidence type="ECO:0000255" key="1">
    <source>
        <dbReference type="HAMAP-Rule" id="MF_01458"/>
    </source>
</evidence>
<comment type="function">
    <text evidence="1">Acts as a processive, ATP-dependent zinc metallopeptidase for both cytoplasmic and membrane proteins. Plays a role in the quality control of integral membrane proteins.</text>
</comment>
<comment type="cofactor">
    <cofactor evidence="1">
        <name>Zn(2+)</name>
        <dbReference type="ChEBI" id="CHEBI:29105"/>
    </cofactor>
    <text evidence="1">Binds 1 zinc ion per subunit.</text>
</comment>
<comment type="subunit">
    <text evidence="1">Homohexamer.</text>
</comment>
<comment type="subcellular location">
    <subcellularLocation>
        <location evidence="1">Cell membrane</location>
        <topology evidence="1">Multi-pass membrane protein</topology>
        <orientation evidence="1">Cytoplasmic side</orientation>
    </subcellularLocation>
</comment>
<comment type="similarity">
    <text evidence="1">In the central section; belongs to the AAA ATPase family.</text>
</comment>
<comment type="similarity">
    <text evidence="1">In the C-terminal section; belongs to the peptidase M41 family.</text>
</comment>
<organism>
    <name type="scientific">Symbiobacterium thermophilum (strain DSM 24528 / JCM 14929 / IAM 14863 / T)</name>
    <dbReference type="NCBI Taxonomy" id="292459"/>
    <lineage>
        <taxon>Bacteria</taxon>
        <taxon>Bacillati</taxon>
        <taxon>Bacillota</taxon>
        <taxon>Clostridia</taxon>
        <taxon>Eubacteriales</taxon>
        <taxon>Symbiobacteriaceae</taxon>
        <taxon>Symbiobacterium</taxon>
    </lineage>
</organism>
<gene>
    <name evidence="1" type="primary">ftsH2</name>
    <name type="ordered locus">STH126</name>
</gene>
<dbReference type="EC" id="3.4.24.-" evidence="1"/>
<dbReference type="EMBL" id="AP006840">
    <property type="protein sequence ID" value="BAD39111.1"/>
    <property type="molecule type" value="Genomic_DNA"/>
</dbReference>
<dbReference type="RefSeq" id="WP_011194261.1">
    <property type="nucleotide sequence ID" value="NC_006177.1"/>
</dbReference>
<dbReference type="SMR" id="Q67T82"/>
<dbReference type="STRING" id="292459.STH126"/>
<dbReference type="KEGG" id="sth:STH126"/>
<dbReference type="eggNOG" id="COG0465">
    <property type="taxonomic scope" value="Bacteria"/>
</dbReference>
<dbReference type="HOGENOM" id="CLU_000688_16_2_9"/>
<dbReference type="OrthoDB" id="9809379at2"/>
<dbReference type="Proteomes" id="UP000000417">
    <property type="component" value="Chromosome"/>
</dbReference>
<dbReference type="GO" id="GO:0005886">
    <property type="term" value="C:plasma membrane"/>
    <property type="evidence" value="ECO:0007669"/>
    <property type="project" value="UniProtKB-SubCell"/>
</dbReference>
<dbReference type="GO" id="GO:0005524">
    <property type="term" value="F:ATP binding"/>
    <property type="evidence" value="ECO:0007669"/>
    <property type="project" value="UniProtKB-UniRule"/>
</dbReference>
<dbReference type="GO" id="GO:0016887">
    <property type="term" value="F:ATP hydrolysis activity"/>
    <property type="evidence" value="ECO:0007669"/>
    <property type="project" value="UniProtKB-UniRule"/>
</dbReference>
<dbReference type="GO" id="GO:0004176">
    <property type="term" value="F:ATP-dependent peptidase activity"/>
    <property type="evidence" value="ECO:0007669"/>
    <property type="project" value="InterPro"/>
</dbReference>
<dbReference type="GO" id="GO:0004222">
    <property type="term" value="F:metalloendopeptidase activity"/>
    <property type="evidence" value="ECO:0007669"/>
    <property type="project" value="InterPro"/>
</dbReference>
<dbReference type="GO" id="GO:0008270">
    <property type="term" value="F:zinc ion binding"/>
    <property type="evidence" value="ECO:0007669"/>
    <property type="project" value="UniProtKB-UniRule"/>
</dbReference>
<dbReference type="GO" id="GO:0030163">
    <property type="term" value="P:protein catabolic process"/>
    <property type="evidence" value="ECO:0007669"/>
    <property type="project" value="UniProtKB-UniRule"/>
</dbReference>
<dbReference type="GO" id="GO:0006508">
    <property type="term" value="P:proteolysis"/>
    <property type="evidence" value="ECO:0007669"/>
    <property type="project" value="UniProtKB-KW"/>
</dbReference>
<dbReference type="CDD" id="cd19501">
    <property type="entry name" value="RecA-like_FtsH"/>
    <property type="match status" value="1"/>
</dbReference>
<dbReference type="FunFam" id="1.10.8.60:FF:000001">
    <property type="entry name" value="ATP-dependent zinc metalloprotease FtsH"/>
    <property type="match status" value="1"/>
</dbReference>
<dbReference type="FunFam" id="1.20.58.760:FF:000001">
    <property type="entry name" value="ATP-dependent zinc metalloprotease FtsH"/>
    <property type="match status" value="1"/>
</dbReference>
<dbReference type="FunFam" id="3.40.50.300:FF:000001">
    <property type="entry name" value="ATP-dependent zinc metalloprotease FtsH"/>
    <property type="match status" value="1"/>
</dbReference>
<dbReference type="Gene3D" id="1.10.8.60">
    <property type="match status" value="1"/>
</dbReference>
<dbReference type="Gene3D" id="3.30.720.210">
    <property type="match status" value="1"/>
</dbReference>
<dbReference type="Gene3D" id="3.40.50.300">
    <property type="entry name" value="P-loop containing nucleotide triphosphate hydrolases"/>
    <property type="match status" value="1"/>
</dbReference>
<dbReference type="Gene3D" id="1.20.58.760">
    <property type="entry name" value="Peptidase M41"/>
    <property type="match status" value="1"/>
</dbReference>
<dbReference type="HAMAP" id="MF_01458">
    <property type="entry name" value="FtsH"/>
    <property type="match status" value="1"/>
</dbReference>
<dbReference type="InterPro" id="IPR003593">
    <property type="entry name" value="AAA+_ATPase"/>
</dbReference>
<dbReference type="InterPro" id="IPR041569">
    <property type="entry name" value="AAA_lid_3"/>
</dbReference>
<dbReference type="InterPro" id="IPR003959">
    <property type="entry name" value="ATPase_AAA_core"/>
</dbReference>
<dbReference type="InterPro" id="IPR003960">
    <property type="entry name" value="ATPase_AAA_CS"/>
</dbReference>
<dbReference type="InterPro" id="IPR005936">
    <property type="entry name" value="FtsH"/>
</dbReference>
<dbReference type="InterPro" id="IPR027417">
    <property type="entry name" value="P-loop_NTPase"/>
</dbReference>
<dbReference type="InterPro" id="IPR011546">
    <property type="entry name" value="Pept_M41_FtsH_extracell"/>
</dbReference>
<dbReference type="InterPro" id="IPR000642">
    <property type="entry name" value="Peptidase_M41"/>
</dbReference>
<dbReference type="InterPro" id="IPR037219">
    <property type="entry name" value="Peptidase_M41-like"/>
</dbReference>
<dbReference type="NCBIfam" id="TIGR01241">
    <property type="entry name" value="FtsH_fam"/>
    <property type="match status" value="1"/>
</dbReference>
<dbReference type="PANTHER" id="PTHR23076:SF97">
    <property type="entry name" value="ATP-DEPENDENT ZINC METALLOPROTEASE YME1L1"/>
    <property type="match status" value="1"/>
</dbReference>
<dbReference type="PANTHER" id="PTHR23076">
    <property type="entry name" value="METALLOPROTEASE M41 FTSH"/>
    <property type="match status" value="1"/>
</dbReference>
<dbReference type="Pfam" id="PF00004">
    <property type="entry name" value="AAA"/>
    <property type="match status" value="1"/>
</dbReference>
<dbReference type="Pfam" id="PF17862">
    <property type="entry name" value="AAA_lid_3"/>
    <property type="match status" value="1"/>
</dbReference>
<dbReference type="Pfam" id="PF06480">
    <property type="entry name" value="FtsH_ext"/>
    <property type="match status" value="1"/>
</dbReference>
<dbReference type="Pfam" id="PF01434">
    <property type="entry name" value="Peptidase_M41"/>
    <property type="match status" value="1"/>
</dbReference>
<dbReference type="SMART" id="SM00382">
    <property type="entry name" value="AAA"/>
    <property type="match status" value="1"/>
</dbReference>
<dbReference type="SUPFAM" id="SSF140990">
    <property type="entry name" value="FtsH protease domain-like"/>
    <property type="match status" value="1"/>
</dbReference>
<dbReference type="SUPFAM" id="SSF52540">
    <property type="entry name" value="P-loop containing nucleoside triphosphate hydrolases"/>
    <property type="match status" value="1"/>
</dbReference>
<dbReference type="PROSITE" id="PS00674">
    <property type="entry name" value="AAA"/>
    <property type="match status" value="1"/>
</dbReference>
<keyword id="KW-0067">ATP-binding</keyword>
<keyword id="KW-1003">Cell membrane</keyword>
<keyword id="KW-0378">Hydrolase</keyword>
<keyword id="KW-0472">Membrane</keyword>
<keyword id="KW-0479">Metal-binding</keyword>
<keyword id="KW-0482">Metalloprotease</keyword>
<keyword id="KW-0547">Nucleotide-binding</keyword>
<keyword id="KW-0645">Protease</keyword>
<keyword id="KW-1185">Reference proteome</keyword>
<keyword id="KW-0812">Transmembrane</keyword>
<keyword id="KW-1133">Transmembrane helix</keyword>
<keyword id="KW-0862">Zinc</keyword>
<sequence length="587" mass="64101">MSSDRTREVTKRILMVLFGLWLLQFFFLPPLTTRPTELSYSAFLDALEDRRVQEAVVRDRVLQGKMVGGESFTVTLPPDAAGLAERLEEAGVEQRYEVTRTPWWVTLLPTVLWLAVMVGLFAWAQKRQAGAFGLARSTVKPLAPGESPVTFADVAGMDEVKGELEEIVDYLKNPDKYRAIGARIPKGVLLYGPPGTGKTLLARAVAGEAGVPFFALSGSSFVELFVGMGASRVRELFAQARKNAPCIVFIDEIDAVGRQRGSAAVVGGHDEREQTLNQLLTEMDGFGAYEGVIVMAATNRPDVLDKALLRPGRFDRQIPVGPPDAAGREEILRVHAKGKQLDPSLDLAAVARRTPGFTGADLANLLNEAAILAVRRGRSHITMSEIDEAIDRVVAGGPARKGRMIRPEEKRRVAVHEAGHALVATLTPGADPVQKVTIIPRGRAGGFTLTTPEEDQMLYTRSELEARLKMLLGGLAAEEVLLGERSTGAQDDLRRATQVAREMISRYGMGQSVGLMAVPDTDWPGVQNLSQESAAAIEREVQALLDRLYREVRSLIETNRDRLVALVVELSDRETLDGDDVRRILSA</sequence>
<reference key="1">
    <citation type="journal article" date="2004" name="Nucleic Acids Res.">
        <title>Genome sequence of Symbiobacterium thermophilum, an uncultivable bacterium that depends on microbial commensalism.</title>
        <authorList>
            <person name="Ueda K."/>
            <person name="Yamashita A."/>
            <person name="Ishikawa J."/>
            <person name="Shimada M."/>
            <person name="Watsuji T."/>
            <person name="Morimura K."/>
            <person name="Ikeda H."/>
            <person name="Hattori M."/>
            <person name="Beppu T."/>
        </authorList>
    </citation>
    <scope>NUCLEOTIDE SEQUENCE [LARGE SCALE GENOMIC DNA]</scope>
    <source>
        <strain>DSM 24528 / JCM 14929 / IAM 14863 / T</strain>
    </source>
</reference>